<comment type="function">
    <text evidence="6">Activates both Ras-dependent and Ras-independent migratory pathways in melanomas. Contributes to the early phases of agrin-induced tyrosine phosphorylation of CHRNB1.</text>
</comment>
<comment type="subunit">
    <text evidence="7">Interacts (via PID domain) with phosphorylated MUSK (via NPXY motif); undergoes tyrosine phosphorylation downstream of activated MUSK. Interacts with GRB2; the interaction is dependent of Tyr-424 phosphorylation and increased by EGF.</text>
</comment>
<comment type="interaction">
    <interactant intactId="EBI-9453524">
        <id>Q6S5L8</id>
    </interactant>
    <interactant intactId="EBI-608057">
        <id>P10275</id>
        <label>AR</label>
    </interactant>
    <organismsDiffer>false</organismsDiffer>
    <experiments>3</experiments>
</comment>
<comment type="interaction">
    <interactant intactId="EBI-9453524">
        <id>Q6S5L8</id>
    </interactant>
    <interactant intactId="EBI-297353">
        <id>P00533</id>
        <label>EGFR</label>
    </interactant>
    <organismsDiffer>false</organismsDiffer>
    <experiments>3</experiments>
</comment>
<comment type="interaction">
    <interactant intactId="EBI-9453524">
        <id>Q6S5L8</id>
    </interactant>
    <interactant intactId="EBI-1039152">
        <id>P08581</id>
        <label>MET</label>
    </interactant>
    <organismsDiffer>false</organismsDiffer>
    <experiments>3</experiments>
</comment>
<comment type="subcellular location">
    <subcellularLocation>
        <location>Postsynaptic cell membrane</location>
    </subcellularLocation>
    <text evidence="1">Colocalized with MUSK at the neuromuscular junction.</text>
</comment>
<comment type="alternative products">
    <event type="alternative splicing"/>
    <isoform>
        <id>Q6S5L8-1</id>
        <name>1</name>
        <sequence type="displayed"/>
    </isoform>
    <isoform>
        <id>Q6S5L8-2</id>
        <name>2</name>
        <sequence type="described" ref="VSP_033965 VSP_033966"/>
    </isoform>
</comment>
<comment type="tissue specificity">
    <text evidence="6">Only expressed in melanomas. Weakly expressed in normal melanocytes and benign nevi. Highly expressed at the transition from radial growth phase to vertical growth phase and metastatic melanomas, when tumor cells acquire migratory competence and invasive potential.</text>
</comment>
<comment type="PTM">
    <text evidence="7">Phosphorylated; the phosphorylation is enhanced by EGF. Phosphorylation at Tyr-424 is required for the interaction with GRB2.</text>
</comment>
<comment type="online information" name="Atlas of Genetics and Cytogenetics in Oncology and Haematology">
    <link uri="https://atlasgeneticsoncology.org/gene/44503/SHC4"/>
</comment>
<protein>
    <recommendedName>
        <fullName>SHC-transforming protein 4</fullName>
    </recommendedName>
    <alternativeName>
        <fullName>Rai-like protein</fullName>
        <shortName>RaLP</shortName>
    </alternativeName>
    <alternativeName>
        <fullName>SHC-transforming protein D</fullName>
        <shortName>hShcD</shortName>
    </alternativeName>
    <alternativeName>
        <fullName>Src homology 2 domain-containing-transforming protein C4</fullName>
        <shortName>SH2 domain protein C4</shortName>
    </alternativeName>
</protein>
<feature type="chain" id="PRO_0000337200" description="SHC-transforming protein 4">
    <location>
        <begin position="1"/>
        <end position="630"/>
    </location>
</feature>
<feature type="domain" description="PID" evidence="2">
    <location>
        <begin position="186"/>
        <end position="369"/>
    </location>
</feature>
<feature type="domain" description="SH2" evidence="3">
    <location>
        <begin position="526"/>
        <end position="617"/>
    </location>
</feature>
<feature type="region of interest" description="CH2">
    <location>
        <begin position="1"/>
        <end position="185"/>
    </location>
</feature>
<feature type="region of interest" description="Disordered" evidence="4">
    <location>
        <begin position="39"/>
        <end position="80"/>
    </location>
</feature>
<feature type="region of interest" description="Disordered" evidence="4">
    <location>
        <begin position="118"/>
        <end position="150"/>
    </location>
</feature>
<feature type="region of interest" description="CH1">
    <location>
        <begin position="370"/>
        <end position="525"/>
    </location>
</feature>
<feature type="region of interest" description="Disordered" evidence="4">
    <location>
        <begin position="471"/>
        <end position="514"/>
    </location>
</feature>
<feature type="compositionally biased region" description="Low complexity" evidence="4">
    <location>
        <begin position="125"/>
        <end position="142"/>
    </location>
</feature>
<feature type="compositionally biased region" description="Polar residues" evidence="4">
    <location>
        <begin position="471"/>
        <end position="486"/>
    </location>
</feature>
<feature type="compositionally biased region" description="Polar residues" evidence="4">
    <location>
        <begin position="502"/>
        <end position="513"/>
    </location>
</feature>
<feature type="modified residue" description="Phosphotyrosine" evidence="7">
    <location>
        <position position="424"/>
    </location>
</feature>
<feature type="splice variant" id="VSP_033965" description="In isoform 2." evidence="8">
    <location>
        <begin position="1"/>
        <end position="243"/>
    </location>
</feature>
<feature type="splice variant" id="VSP_033966" description="In isoform 2." evidence="8">
    <original>KFLSTVLGKSNLQFSGMNIKLTISTCSLTLMNLDNQQ</original>
    <variation>MLPALEHWIPKFFSFRTRTGSPLSLACRQPIVGPCDH</variation>
    <location>
        <begin position="244"/>
        <end position="280"/>
    </location>
</feature>
<feature type="sequence variant" id="VAR_043672" description="In dbSNP:rs17856991." evidence="5">
    <original>N</original>
    <variation>D</variation>
    <location>
        <position position="52"/>
    </location>
</feature>
<feature type="sequence variant" id="VAR_043673" description="In dbSNP:rs17856990." evidence="5">
    <original>K</original>
    <variation>E</variation>
    <location>
        <position position="244"/>
    </location>
</feature>
<feature type="sequence variant" id="VAR_043674" description="In dbSNP:rs16961728.">
    <original>Q</original>
    <variation>H</variation>
    <location>
        <position position="400"/>
    </location>
</feature>
<feature type="sequence variant" id="VAR_043675" description="In dbSNP:rs17856992." evidence="5">
    <original>D</original>
    <variation>G</variation>
    <location>
        <position position="447"/>
    </location>
</feature>
<feature type="mutagenesis site" description="Phosphorylation is markedly decreased. Completely reduces the phosphorylation and interaction with MUSK; when associated with K-549." evidence="7">
    <original>R</original>
    <variation>Q</variation>
    <location>
        <position position="315"/>
    </location>
</feature>
<feature type="mutagenesis site" description="Remains phosphorylated. Contains a residual phosphorylation; when associated with F-465. Retains the ability to bind MUSK. Reduced the phosphorylation in presence of MUSK; when associated with F-424 and F-465. Completely abolishes the phosphorylation in presence of MUSK; when associated with F-403; F-413; F-424 and F-465. Retains the ability to bind MUSK; when associated with F-465. Retains the ability to bind MUSK; when associated with F-424 and F-465. Retains the ability to bind MUSK; when associated with F-403; F-413; F-424 and F-465." evidence="7">
    <original>YY</original>
    <variation>F</variation>
    <location>
        <begin position="374"/>
        <end position="375"/>
    </location>
</feature>
<feature type="mutagenesis site" description="Completely abolishes the phosphorylation in presence of MUSK; when associated with 374-F-F-375; F-413; F-424 and F-465." evidence="7">
    <original>Y</original>
    <variation>F</variation>
    <location>
        <position position="403"/>
    </location>
</feature>
<feature type="mutagenesis site" description="Completely abolishes the phosphorylation in presence of MUSK; when associated with 374-F-F-375; F-403; F-424 and F-465." evidence="7">
    <original>Y</original>
    <variation>F</variation>
    <location>
        <position position="413"/>
    </location>
</feature>
<feature type="mutagenesis site" description="Significantly decreased GRB2 interaction. Reduced the phosphorylation in presence of MUSK; when associated with 374-F-F-375 and F-465. Completely abolishes the phosphorylation in presence of MUSK; when associated with 374-F-F-375; F-403; F-413 and F-465." evidence="7">
    <original>Y</original>
    <variation>F</variation>
    <location>
        <position position="424"/>
    </location>
</feature>
<feature type="mutagenesis site" description="Remains phosphorylated. Contains a residual phosphorylation; when associated with 374-F-F-375. Reduced the phosphorylation in presence of MUSK; when associated with 374-F-F-375 and 424. Completely abolishes the phosphorylation in presence of MUSK; when associated with 374-F-F-375; F-403; F-413 and F-424. Retains the ability to bind MUSK. Retains the ability to bind MUSK; when associated with 374-F-F-375. Retains the ability to bind MUSK; when associated with 374-F-F-375 and F-424. Retains the ability to bind MUSK; when associated with 374-F-F-375; F-403; F-413 and F-424." evidence="7">
    <original>Y</original>
    <variation>F</variation>
    <location>
        <position position="465"/>
    </location>
</feature>
<feature type="mutagenesis site" description="Completely reduces the phosphorylation and interaction with MUSK; when associated with Q-315." evidence="7">
    <original>R</original>
    <variation>K</variation>
    <location>
        <position position="549"/>
    </location>
</feature>
<proteinExistence type="evidence at protein level"/>
<gene>
    <name type="primary">SHC4</name>
    <name type="synonym">SHCD</name>
    <name type="ORF">UNQ6438/PRO21364</name>
</gene>
<name>SHC4_HUMAN</name>
<reference key="1">
    <citation type="journal article" date="2007" name="Cancer Res.">
        <title>RaLP, a new member of the Src homology and collagen family, regulates cell migration and tumor growth of metastatic melanomas.</title>
        <authorList>
            <person name="Fagiani E."/>
            <person name="Giardina G."/>
            <person name="Luzi L."/>
            <person name="Cesaroni M."/>
            <person name="Quarto M."/>
            <person name="Capra M."/>
            <person name="Germano G."/>
            <person name="Bono M."/>
            <person name="Capillo M."/>
            <person name="Pelicci P."/>
            <person name="Lanfrancone L."/>
        </authorList>
    </citation>
    <scope>NUCLEOTIDE SEQUENCE [MRNA] (ISOFORM 1)</scope>
    <scope>FUNCTION</scope>
    <scope>TISSUE SPECIFICITY</scope>
</reference>
<reference key="2">
    <citation type="journal article" date="2003" name="Genome Res.">
        <title>The secreted protein discovery initiative (SPDI), a large-scale effort to identify novel human secreted and transmembrane proteins: a bioinformatics assessment.</title>
        <authorList>
            <person name="Clark H.F."/>
            <person name="Gurney A.L."/>
            <person name="Abaya E."/>
            <person name="Baker K."/>
            <person name="Baldwin D.T."/>
            <person name="Brush J."/>
            <person name="Chen J."/>
            <person name="Chow B."/>
            <person name="Chui C."/>
            <person name="Crowley C."/>
            <person name="Currell B."/>
            <person name="Deuel B."/>
            <person name="Dowd P."/>
            <person name="Eaton D."/>
            <person name="Foster J.S."/>
            <person name="Grimaldi C."/>
            <person name="Gu Q."/>
            <person name="Hass P.E."/>
            <person name="Heldens S."/>
            <person name="Huang A."/>
            <person name="Kim H.S."/>
            <person name="Klimowski L."/>
            <person name="Jin Y."/>
            <person name="Johnson S."/>
            <person name="Lee J."/>
            <person name="Lewis L."/>
            <person name="Liao D."/>
            <person name="Mark M.R."/>
            <person name="Robbie E."/>
            <person name="Sanchez C."/>
            <person name="Schoenfeld J."/>
            <person name="Seshagiri S."/>
            <person name="Simmons L."/>
            <person name="Singh J."/>
            <person name="Smith V."/>
            <person name="Stinson J."/>
            <person name="Vagts A."/>
            <person name="Vandlen R.L."/>
            <person name="Watanabe C."/>
            <person name="Wieand D."/>
            <person name="Woods K."/>
            <person name="Xie M.-H."/>
            <person name="Yansura D.G."/>
            <person name="Yi S."/>
            <person name="Yu G."/>
            <person name="Yuan J."/>
            <person name="Zhang M."/>
            <person name="Zhang Z."/>
            <person name="Goddard A.D."/>
            <person name="Wood W.I."/>
            <person name="Godowski P.J."/>
            <person name="Gray A.M."/>
        </authorList>
    </citation>
    <scope>NUCLEOTIDE SEQUENCE [LARGE SCALE MRNA] (ISOFORM 2)</scope>
</reference>
<reference key="3">
    <citation type="journal article" date="2004" name="Genome Res.">
        <title>The status, quality, and expansion of the NIH full-length cDNA project: the Mammalian Gene Collection (MGC).</title>
        <authorList>
            <consortium name="The MGC Project Team"/>
        </authorList>
    </citation>
    <scope>NUCLEOTIDE SEQUENCE [LARGE SCALE MRNA] (ISOFORM 1)</scope>
    <scope>VARIANTS ASP-52; GLU-244 AND GLY-447</scope>
    <source>
        <tissue>Testis</tissue>
    </source>
</reference>
<reference key="4">
    <citation type="journal article" date="2007" name="Mol. Cell. Biol.">
        <title>Analysis of a Shc family adaptor protein, ShcD/Shc4, that associates with muscle-specific kinase.</title>
        <authorList>
            <person name="Jones N."/>
            <person name="Hardy W.R."/>
            <person name="Friese M.B."/>
            <person name="Jorgensen C."/>
            <person name="Smith M.J."/>
            <person name="Woody N.M."/>
            <person name="Burden S.J."/>
            <person name="Pawson T."/>
        </authorList>
    </citation>
    <scope>INTERACTION WITH MUSK AND GRB2</scope>
    <scope>PHOSPHORYLATION AT TYR-424</scope>
    <scope>MUTAGENESIS OF ARG-315; 374-TYR-TYR-375; TYR-403; TYR-413; TYR-424; TYR-465 AND ARG-549</scope>
</reference>
<dbReference type="EMBL" id="AY464565">
    <property type="protein sequence ID" value="AAR19363.1"/>
    <property type="molecule type" value="mRNA"/>
</dbReference>
<dbReference type="EMBL" id="AY358250">
    <property type="protein sequence ID" value="AAQ88617.1"/>
    <property type="molecule type" value="mRNA"/>
</dbReference>
<dbReference type="EMBL" id="BC033907">
    <property type="protein sequence ID" value="AAH33907.1"/>
    <property type="molecule type" value="mRNA"/>
</dbReference>
<dbReference type="CCDS" id="CCDS10130.1">
    <molecule id="Q6S5L8-1"/>
</dbReference>
<dbReference type="RefSeq" id="NP_976224.3">
    <molecule id="Q6S5L8-1"/>
    <property type="nucleotide sequence ID" value="NM_203349.3"/>
</dbReference>
<dbReference type="SMR" id="Q6S5L8"/>
<dbReference type="BioGRID" id="134386">
    <property type="interactions" value="29"/>
</dbReference>
<dbReference type="FunCoup" id="Q6S5L8">
    <property type="interactions" value="1645"/>
</dbReference>
<dbReference type="IntAct" id="Q6S5L8">
    <property type="interactions" value="10"/>
</dbReference>
<dbReference type="STRING" id="9606.ENSP00000329668"/>
<dbReference type="iPTMnet" id="Q6S5L8"/>
<dbReference type="PhosphoSitePlus" id="Q6S5L8"/>
<dbReference type="BioMuta" id="SHC4"/>
<dbReference type="DMDM" id="74722804"/>
<dbReference type="jPOST" id="Q6S5L8"/>
<dbReference type="MassIVE" id="Q6S5L8"/>
<dbReference type="PaxDb" id="9606-ENSP00000329668"/>
<dbReference type="PeptideAtlas" id="Q6S5L8"/>
<dbReference type="Antibodypedia" id="24605">
    <property type="antibodies" value="169 antibodies from 31 providers"/>
</dbReference>
<dbReference type="DNASU" id="399694"/>
<dbReference type="Ensembl" id="ENST00000332408.9">
    <molecule id="Q6S5L8-1"/>
    <property type="protein sequence ID" value="ENSP00000329668.4"/>
    <property type="gene ID" value="ENSG00000185634.12"/>
</dbReference>
<dbReference type="Ensembl" id="ENST00000396535.7">
    <molecule id="Q6S5L8-2"/>
    <property type="protein sequence ID" value="ENSP00000379786.3"/>
    <property type="gene ID" value="ENSG00000185634.12"/>
</dbReference>
<dbReference type="GeneID" id="399694"/>
<dbReference type="KEGG" id="hsa:399694"/>
<dbReference type="MANE-Select" id="ENST00000332408.9">
    <property type="protein sequence ID" value="ENSP00000329668.4"/>
    <property type="RefSeq nucleotide sequence ID" value="NM_203349.4"/>
    <property type="RefSeq protein sequence ID" value="NP_976224.3"/>
</dbReference>
<dbReference type="UCSC" id="uc001zxb.2">
    <molecule id="Q6S5L8-1"/>
    <property type="organism name" value="human"/>
</dbReference>
<dbReference type="AGR" id="HGNC:16743"/>
<dbReference type="CTD" id="399694"/>
<dbReference type="DisGeNET" id="399694"/>
<dbReference type="GeneCards" id="SHC4"/>
<dbReference type="HGNC" id="HGNC:16743">
    <property type="gene designation" value="SHC4"/>
</dbReference>
<dbReference type="HPA" id="ENSG00000185634">
    <property type="expression patterns" value="Group enriched (brain, testis)"/>
</dbReference>
<dbReference type="MIM" id="617372">
    <property type="type" value="gene"/>
</dbReference>
<dbReference type="neXtProt" id="NX_Q6S5L8"/>
<dbReference type="OpenTargets" id="ENSG00000185634"/>
<dbReference type="PharmGKB" id="PA142670917"/>
<dbReference type="VEuPathDB" id="HostDB:ENSG00000185634"/>
<dbReference type="eggNOG" id="KOG3697">
    <property type="taxonomic scope" value="Eukaryota"/>
</dbReference>
<dbReference type="GeneTree" id="ENSGT00950000182870"/>
<dbReference type="HOGENOM" id="CLU_029532_2_0_1"/>
<dbReference type="InParanoid" id="Q6S5L8"/>
<dbReference type="OMA" id="MNIDNQQ"/>
<dbReference type="OrthoDB" id="9938362at2759"/>
<dbReference type="PAN-GO" id="Q6S5L8">
    <property type="GO annotations" value="3 GO annotations based on evolutionary models"/>
</dbReference>
<dbReference type="PhylomeDB" id="Q6S5L8"/>
<dbReference type="TreeFam" id="TF315807"/>
<dbReference type="PathwayCommons" id="Q6S5L8"/>
<dbReference type="SignaLink" id="Q6S5L8"/>
<dbReference type="SIGNOR" id="Q6S5L8"/>
<dbReference type="BioGRID-ORCS" id="399694">
    <property type="hits" value="4 hits in 1143 CRISPR screens"/>
</dbReference>
<dbReference type="ChiTaRS" id="SHC4">
    <property type="organism name" value="human"/>
</dbReference>
<dbReference type="GenomeRNAi" id="399694"/>
<dbReference type="Pharos" id="Q6S5L8">
    <property type="development level" value="Tbio"/>
</dbReference>
<dbReference type="PRO" id="PR:Q6S5L8"/>
<dbReference type="Proteomes" id="UP000005640">
    <property type="component" value="Chromosome 15"/>
</dbReference>
<dbReference type="RNAct" id="Q6S5L8">
    <property type="molecule type" value="protein"/>
</dbReference>
<dbReference type="Bgee" id="ENSG00000185634">
    <property type="expression patterns" value="Expressed in buccal mucosa cell and 133 other cell types or tissues"/>
</dbReference>
<dbReference type="ExpressionAtlas" id="Q6S5L8">
    <property type="expression patterns" value="baseline and differential"/>
</dbReference>
<dbReference type="GO" id="GO:0005886">
    <property type="term" value="C:plasma membrane"/>
    <property type="evidence" value="ECO:0000318"/>
    <property type="project" value="GO_Central"/>
</dbReference>
<dbReference type="GO" id="GO:0045211">
    <property type="term" value="C:postsynaptic membrane"/>
    <property type="evidence" value="ECO:0007669"/>
    <property type="project" value="UniProtKB-SubCell"/>
</dbReference>
<dbReference type="GO" id="GO:0019904">
    <property type="term" value="F:protein domain specific binding"/>
    <property type="evidence" value="ECO:0007669"/>
    <property type="project" value="Ensembl"/>
</dbReference>
<dbReference type="GO" id="GO:0030971">
    <property type="term" value="F:receptor tyrosine kinase binding"/>
    <property type="evidence" value="ECO:0000318"/>
    <property type="project" value="GO_Central"/>
</dbReference>
<dbReference type="GO" id="GO:0006915">
    <property type="term" value="P:apoptotic process"/>
    <property type="evidence" value="ECO:0007669"/>
    <property type="project" value="Ensembl"/>
</dbReference>
<dbReference type="GO" id="GO:0007169">
    <property type="term" value="P:cell surface receptor protein tyrosine kinase signaling pathway"/>
    <property type="evidence" value="ECO:0000318"/>
    <property type="project" value="GO_Central"/>
</dbReference>
<dbReference type="GO" id="GO:0035556">
    <property type="term" value="P:intracellular signal transduction"/>
    <property type="evidence" value="ECO:0007669"/>
    <property type="project" value="InterPro"/>
</dbReference>
<dbReference type="GO" id="GO:0008284">
    <property type="term" value="P:positive regulation of cell population proliferation"/>
    <property type="evidence" value="ECO:0007669"/>
    <property type="project" value="Ensembl"/>
</dbReference>
<dbReference type="GO" id="GO:0010468">
    <property type="term" value="P:regulation of gene expression"/>
    <property type="evidence" value="ECO:0007669"/>
    <property type="project" value="Ensembl"/>
</dbReference>
<dbReference type="GO" id="GO:0048863">
    <property type="term" value="P:stem cell differentiation"/>
    <property type="evidence" value="ECO:0007669"/>
    <property type="project" value="Ensembl"/>
</dbReference>
<dbReference type="CDD" id="cd01209">
    <property type="entry name" value="PTB_Shc"/>
    <property type="match status" value="1"/>
</dbReference>
<dbReference type="CDD" id="cd09925">
    <property type="entry name" value="SH2_SHC"/>
    <property type="match status" value="1"/>
</dbReference>
<dbReference type="FunFam" id="2.30.29.30:FF:000036">
    <property type="entry name" value="SHC-transforming protein 1 isoform 3"/>
    <property type="match status" value="1"/>
</dbReference>
<dbReference type="FunFam" id="3.30.505.10:FF:000005">
    <property type="entry name" value="SHC-transforming protein 1 isoform 3"/>
    <property type="match status" value="1"/>
</dbReference>
<dbReference type="Gene3D" id="2.30.29.30">
    <property type="entry name" value="Pleckstrin-homology domain (PH domain)/Phosphotyrosine-binding domain (PTB)"/>
    <property type="match status" value="1"/>
</dbReference>
<dbReference type="Gene3D" id="3.30.505.10">
    <property type="entry name" value="SH2 domain"/>
    <property type="match status" value="1"/>
</dbReference>
<dbReference type="InterPro" id="IPR051235">
    <property type="entry name" value="CEP152/SHC-Transforming"/>
</dbReference>
<dbReference type="InterPro" id="IPR011993">
    <property type="entry name" value="PH-like_dom_sf"/>
</dbReference>
<dbReference type="InterPro" id="IPR006019">
    <property type="entry name" value="PID_Shc-like"/>
</dbReference>
<dbReference type="InterPro" id="IPR006020">
    <property type="entry name" value="PTB/PI_dom"/>
</dbReference>
<dbReference type="InterPro" id="IPR000980">
    <property type="entry name" value="SH2"/>
</dbReference>
<dbReference type="InterPro" id="IPR036860">
    <property type="entry name" value="SH2_dom_sf"/>
</dbReference>
<dbReference type="InterPro" id="IPR035676">
    <property type="entry name" value="SHC_SH2"/>
</dbReference>
<dbReference type="PANTHER" id="PTHR10337">
    <property type="entry name" value="SHC TRANSFORMING PROTEIN"/>
    <property type="match status" value="1"/>
</dbReference>
<dbReference type="PANTHER" id="PTHR10337:SF12">
    <property type="entry name" value="SHC-TRANSFORMING PROTEIN 4"/>
    <property type="match status" value="1"/>
</dbReference>
<dbReference type="Pfam" id="PF00640">
    <property type="entry name" value="PID"/>
    <property type="match status" value="1"/>
</dbReference>
<dbReference type="Pfam" id="PF00017">
    <property type="entry name" value="SH2"/>
    <property type="match status" value="1"/>
</dbReference>
<dbReference type="PRINTS" id="PR00401">
    <property type="entry name" value="SH2DOMAIN"/>
</dbReference>
<dbReference type="PRINTS" id="PR00629">
    <property type="entry name" value="SHCPIDOMAIN"/>
</dbReference>
<dbReference type="SMART" id="SM00462">
    <property type="entry name" value="PTB"/>
    <property type="match status" value="1"/>
</dbReference>
<dbReference type="SMART" id="SM00252">
    <property type="entry name" value="SH2"/>
    <property type="match status" value="1"/>
</dbReference>
<dbReference type="SUPFAM" id="SSF50729">
    <property type="entry name" value="PH domain-like"/>
    <property type="match status" value="1"/>
</dbReference>
<dbReference type="SUPFAM" id="SSF55550">
    <property type="entry name" value="SH2 domain"/>
    <property type="match status" value="1"/>
</dbReference>
<dbReference type="PROSITE" id="PS01179">
    <property type="entry name" value="PID"/>
    <property type="match status" value="1"/>
</dbReference>
<dbReference type="PROSITE" id="PS50001">
    <property type="entry name" value="SH2"/>
    <property type="match status" value="1"/>
</dbReference>
<accession>Q6S5L8</accession>
<accession>Q6UXQ3</accession>
<accession>Q8IYW3</accession>
<sequence>MRERGQDSLAGLVLYVGLFGHPGMLHRAKYSRFRNESITSLDEGSSGGSVGNKGSPQPPHPALAPHLPTEDATLPSQESPTPLCTLIPRMASMKLANPATLLSLKNFCLGTKEVPRLKLQESRDPGSSGPSSPETSLSRSGTAPPPQQDLVGHRATALTPDSCPLPGPGEPTLRSRQDRHFLQHLLGMGMNYCVRYMGCVEVLQSMRSLDFGMRTQVTREAISRLCEAVPGANGAIKKRKPPVKFLSTVLGKSNLQFSGMNIKLTISTCSLTLMNLDNQQIIANHHMQSISFASGGDPDTTDYVAYVAKDPVNQRACHILECHNGMAQDVISTIGQAFELRFKQYLKNPSLNTSCESEEVHIDSHAEEREDHEYYNEIPGKQPPVGGVSDMRIKVQATEQMAYCPIQCEKLCYLPGNSKCSSVYENCLEQSRAIGNVHPRGVQSQRDTSLLKHTCRVDLFDDPCYINTQALQSTPGSAGNQRSAQPLGSPWHCGKAPETVQPGATAQPASSHSLPHIKQQLWSEECYHGKLSRKAAESLLVKDGDFLVRESATSPGQYVLSGLQGGQAKHLLLVDPEGKVRTKDHVFDNVGHLIRYHMDNSLPIISSGSEVSLKQPVRKDNNPALLHSNK</sequence>
<organism>
    <name type="scientific">Homo sapiens</name>
    <name type="common">Human</name>
    <dbReference type="NCBI Taxonomy" id="9606"/>
    <lineage>
        <taxon>Eukaryota</taxon>
        <taxon>Metazoa</taxon>
        <taxon>Chordata</taxon>
        <taxon>Craniata</taxon>
        <taxon>Vertebrata</taxon>
        <taxon>Euteleostomi</taxon>
        <taxon>Mammalia</taxon>
        <taxon>Eutheria</taxon>
        <taxon>Euarchontoglires</taxon>
        <taxon>Primates</taxon>
        <taxon>Haplorrhini</taxon>
        <taxon>Catarrhini</taxon>
        <taxon>Hominidae</taxon>
        <taxon>Homo</taxon>
    </lineage>
</organism>
<evidence type="ECO:0000250" key="1"/>
<evidence type="ECO:0000255" key="2">
    <source>
        <dbReference type="PROSITE-ProRule" id="PRU00148"/>
    </source>
</evidence>
<evidence type="ECO:0000255" key="3">
    <source>
        <dbReference type="PROSITE-ProRule" id="PRU00191"/>
    </source>
</evidence>
<evidence type="ECO:0000256" key="4">
    <source>
        <dbReference type="SAM" id="MobiDB-lite"/>
    </source>
</evidence>
<evidence type="ECO:0000269" key="5">
    <source>
    </source>
</evidence>
<evidence type="ECO:0000269" key="6">
    <source>
    </source>
</evidence>
<evidence type="ECO:0000269" key="7">
    <source>
    </source>
</evidence>
<evidence type="ECO:0000303" key="8">
    <source>
    </source>
</evidence>
<keyword id="KW-0025">Alternative splicing</keyword>
<keyword id="KW-1003">Cell membrane</keyword>
<keyword id="KW-0472">Membrane</keyword>
<keyword id="KW-0597">Phosphoprotein</keyword>
<keyword id="KW-0628">Postsynaptic cell membrane</keyword>
<keyword id="KW-1267">Proteomics identification</keyword>
<keyword id="KW-1185">Reference proteome</keyword>
<keyword id="KW-0727">SH2 domain</keyword>
<keyword id="KW-0770">Synapse</keyword>